<comment type="function">
    <text evidence="1">Catalyzes the exchange of L-carnitine for gamma-butyrobetaine.</text>
</comment>
<comment type="catalytic activity">
    <reaction evidence="1">
        <text>4-(trimethylamino)butanoate(in) + (R)-carnitine(out) = 4-(trimethylamino)butanoate(out) + (R)-carnitine(in)</text>
        <dbReference type="Rhea" id="RHEA:29427"/>
        <dbReference type="ChEBI" id="CHEBI:16244"/>
        <dbReference type="ChEBI" id="CHEBI:16347"/>
    </reaction>
</comment>
<comment type="pathway">
    <text evidence="1">Amine and polyamine metabolism; carnitine metabolism.</text>
</comment>
<comment type="subunit">
    <text evidence="1">Homotrimer.</text>
</comment>
<comment type="subcellular location">
    <subcellularLocation>
        <location evidence="1">Cell inner membrane</location>
        <topology evidence="1">Multi-pass membrane protein</topology>
    </subcellularLocation>
</comment>
<comment type="similarity">
    <text evidence="1">Belongs to the BCCT transporter (TC 2.A.15) family. CaiT subfamily.</text>
</comment>
<organism>
    <name type="scientific">Escherichia coli (strain ATCC 8739 / DSM 1576 / NBRC 3972 / NCIMB 8545 / WDCM 00012 / Crooks)</name>
    <dbReference type="NCBI Taxonomy" id="481805"/>
    <lineage>
        <taxon>Bacteria</taxon>
        <taxon>Pseudomonadati</taxon>
        <taxon>Pseudomonadota</taxon>
        <taxon>Gammaproteobacteria</taxon>
        <taxon>Enterobacterales</taxon>
        <taxon>Enterobacteriaceae</taxon>
        <taxon>Escherichia</taxon>
    </lineage>
</organism>
<dbReference type="EMBL" id="CP000946">
    <property type="protein sequence ID" value="ACA79229.1"/>
    <property type="molecule type" value="Genomic_DNA"/>
</dbReference>
<dbReference type="RefSeq" id="WP_000787109.1">
    <property type="nucleotide sequence ID" value="NZ_MTFT01000035.1"/>
</dbReference>
<dbReference type="SMR" id="B1IRD6"/>
<dbReference type="KEGG" id="ecl:EcolC_3615"/>
<dbReference type="HOGENOM" id="CLU_010118_6_0_6"/>
<dbReference type="UniPathway" id="UPA00117"/>
<dbReference type="GO" id="GO:0005886">
    <property type="term" value="C:plasma membrane"/>
    <property type="evidence" value="ECO:0007669"/>
    <property type="project" value="UniProtKB-SubCell"/>
</dbReference>
<dbReference type="GO" id="GO:0044667">
    <property type="term" value="F:(R)-carnitine:4-(trimethylammonio)butanoate antiporter activity"/>
    <property type="evidence" value="ECO:0007669"/>
    <property type="project" value="UniProtKB-UniRule"/>
</dbReference>
<dbReference type="GO" id="GO:1900751">
    <property type="term" value="P:4-(trimethylammonio)butanoate transport"/>
    <property type="evidence" value="ECO:0007669"/>
    <property type="project" value="InterPro"/>
</dbReference>
<dbReference type="GO" id="GO:0009437">
    <property type="term" value="P:carnitine metabolic process"/>
    <property type="evidence" value="ECO:0007669"/>
    <property type="project" value="UniProtKB-UniRule"/>
</dbReference>
<dbReference type="HAMAP" id="MF_01049">
    <property type="entry name" value="CaiT"/>
    <property type="match status" value="1"/>
</dbReference>
<dbReference type="InterPro" id="IPR018093">
    <property type="entry name" value="BCCT_CS"/>
</dbReference>
<dbReference type="InterPro" id="IPR000060">
    <property type="entry name" value="BCCT_transptr"/>
</dbReference>
<dbReference type="InterPro" id="IPR023449">
    <property type="entry name" value="BCCT_transptr_CaiT"/>
</dbReference>
<dbReference type="NCBIfam" id="TIGR00842">
    <property type="entry name" value="bcct"/>
    <property type="match status" value="1"/>
</dbReference>
<dbReference type="NCBIfam" id="NF002887">
    <property type="entry name" value="PRK03356.1"/>
    <property type="match status" value="1"/>
</dbReference>
<dbReference type="PANTHER" id="PTHR30047">
    <property type="entry name" value="HIGH-AFFINITY CHOLINE TRANSPORT PROTEIN-RELATED"/>
    <property type="match status" value="1"/>
</dbReference>
<dbReference type="PANTHER" id="PTHR30047:SF11">
    <property type="entry name" value="L-CARNITINE_GAMMA-BUTYROBETAINE ANTIPORTER"/>
    <property type="match status" value="1"/>
</dbReference>
<dbReference type="Pfam" id="PF02028">
    <property type="entry name" value="BCCT"/>
    <property type="match status" value="1"/>
</dbReference>
<dbReference type="PROSITE" id="PS01303">
    <property type="entry name" value="BCCT"/>
    <property type="match status" value="1"/>
</dbReference>
<feature type="chain" id="PRO_1000084421" description="L-carnitine/gamma-butyrobetaine antiporter">
    <location>
        <begin position="1"/>
        <end position="504"/>
    </location>
</feature>
<feature type="transmembrane region" description="Helical" evidence="1">
    <location>
        <begin position="10"/>
        <end position="30"/>
    </location>
</feature>
<feature type="transmembrane region" description="Helical" evidence="1">
    <location>
        <begin position="51"/>
        <end position="71"/>
    </location>
</feature>
<feature type="transmembrane region" description="Helical" evidence="1">
    <location>
        <begin position="92"/>
        <end position="112"/>
    </location>
</feature>
<feature type="transmembrane region" description="Helical" evidence="1">
    <location>
        <begin position="143"/>
        <end position="163"/>
    </location>
</feature>
<feature type="transmembrane region" description="Helical" evidence="1">
    <location>
        <begin position="195"/>
        <end position="215"/>
    </location>
</feature>
<feature type="transmembrane region" description="Helical" evidence="1">
    <location>
        <begin position="231"/>
        <end position="251"/>
    </location>
</feature>
<feature type="transmembrane region" description="Helical" evidence="1">
    <location>
        <begin position="263"/>
        <end position="283"/>
    </location>
</feature>
<feature type="transmembrane region" description="Helical" evidence="1">
    <location>
        <begin position="316"/>
        <end position="336"/>
    </location>
</feature>
<feature type="transmembrane region" description="Helical" evidence="1">
    <location>
        <begin position="347"/>
        <end position="367"/>
    </location>
</feature>
<feature type="transmembrane region" description="Helical" evidence="1">
    <location>
        <begin position="398"/>
        <end position="418"/>
    </location>
</feature>
<feature type="transmembrane region" description="Helical" evidence="1">
    <location>
        <begin position="446"/>
        <end position="466"/>
    </location>
</feature>
<feature type="transmembrane region" description="Helical" evidence="1">
    <location>
        <begin position="475"/>
        <end position="495"/>
    </location>
</feature>
<proteinExistence type="inferred from homology"/>
<sequence>MKNEKRKTGIEPKVFFPPLIIVGILCWLTVRDLDAANVVINAVFSYVTNVWGWAFEWYMVVMLFGWFWLVFGPYAKKRLGNEPPEFSTASWIFMMFASCTSAAVLFWGSIEIYYYISTPPFGLEPNSTGAKELGLAYSLFHWGPLPWATYSFLSVAFAYFFFVRKMEVIRPSSTLVPLVGEKHAKGLFGTIVDNFYLVALIFAMGTSLGLATPLVTECMQWLFGIPHTLQLDAIIITCWIILNAICVACGLQKGVRIASDVRSYLSFLMLGWVFIVSGASFIMNYFTDSVGMLLMYLPRMLFYTDPIAKGGFPQGWTVFYWAWWVIYAIQMSIFLARISRGRTVRELCFGMVLGLTASTWILWTVLGSNTLLLMDKNIINIPNLIEQYGVARAIIETWAALPLSTATMWGFFILCFIATVTLVNACSYTLAMSTCREVRDGEEPPLLVRIGWSILVGIIGIVLLALGGLKPIQTAIIAGGCPLFFVNIMVTLSFIKDAKQNWKD</sequence>
<keyword id="KW-0050">Antiport</keyword>
<keyword id="KW-0997">Cell inner membrane</keyword>
<keyword id="KW-1003">Cell membrane</keyword>
<keyword id="KW-0472">Membrane</keyword>
<keyword id="KW-0812">Transmembrane</keyword>
<keyword id="KW-1133">Transmembrane helix</keyword>
<keyword id="KW-0813">Transport</keyword>
<gene>
    <name evidence="1" type="primary">caiT</name>
    <name type="ordered locus">EcolC_3615</name>
</gene>
<reference key="1">
    <citation type="submission" date="2008-02" db="EMBL/GenBank/DDBJ databases">
        <title>Complete sequence of Escherichia coli C str. ATCC 8739.</title>
        <authorList>
            <person name="Copeland A."/>
            <person name="Lucas S."/>
            <person name="Lapidus A."/>
            <person name="Glavina del Rio T."/>
            <person name="Dalin E."/>
            <person name="Tice H."/>
            <person name="Bruce D."/>
            <person name="Goodwin L."/>
            <person name="Pitluck S."/>
            <person name="Kiss H."/>
            <person name="Brettin T."/>
            <person name="Detter J.C."/>
            <person name="Han C."/>
            <person name="Kuske C.R."/>
            <person name="Schmutz J."/>
            <person name="Larimer F."/>
            <person name="Land M."/>
            <person name="Hauser L."/>
            <person name="Kyrpides N."/>
            <person name="Mikhailova N."/>
            <person name="Ingram L."/>
            <person name="Richardson P."/>
        </authorList>
    </citation>
    <scope>NUCLEOTIDE SEQUENCE [LARGE SCALE GENOMIC DNA]</scope>
    <source>
        <strain>ATCC 8739 / DSM 1576 / NBRC 3972 / NCIMB 8545 / WDCM 00012 / Crooks</strain>
    </source>
</reference>
<accession>B1IRD6</accession>
<name>CAIT_ECOLC</name>
<evidence type="ECO:0000255" key="1">
    <source>
        <dbReference type="HAMAP-Rule" id="MF_01049"/>
    </source>
</evidence>
<protein>
    <recommendedName>
        <fullName evidence="1">L-carnitine/gamma-butyrobetaine antiporter</fullName>
    </recommendedName>
</protein>